<gene>
    <name type="primary">arhgap29</name>
    <name type="ORF">zgc:63950</name>
</gene>
<name>RHG29_DANRE</name>
<organism>
    <name type="scientific">Danio rerio</name>
    <name type="common">Zebrafish</name>
    <name type="synonym">Brachydanio rerio</name>
    <dbReference type="NCBI Taxonomy" id="7955"/>
    <lineage>
        <taxon>Eukaryota</taxon>
        <taxon>Metazoa</taxon>
        <taxon>Chordata</taxon>
        <taxon>Craniata</taxon>
        <taxon>Vertebrata</taxon>
        <taxon>Euteleostomi</taxon>
        <taxon>Actinopterygii</taxon>
        <taxon>Neopterygii</taxon>
        <taxon>Teleostei</taxon>
        <taxon>Ostariophysi</taxon>
        <taxon>Cypriniformes</taxon>
        <taxon>Danionidae</taxon>
        <taxon>Danioninae</taxon>
        <taxon>Danio</taxon>
    </lineage>
</organism>
<evidence type="ECO:0000250" key="1"/>
<evidence type="ECO:0000255" key="2"/>
<evidence type="ECO:0000255" key="3">
    <source>
        <dbReference type="PROSITE-ProRule" id="PRU00172"/>
    </source>
</evidence>
<evidence type="ECO:0000255" key="4">
    <source>
        <dbReference type="PROSITE-ProRule" id="PRU00226"/>
    </source>
</evidence>
<evidence type="ECO:0000255" key="5">
    <source>
        <dbReference type="PROSITE-ProRule" id="PRU01077"/>
    </source>
</evidence>
<evidence type="ECO:0000256" key="6">
    <source>
        <dbReference type="SAM" id="MobiDB-lite"/>
    </source>
</evidence>
<accession>Q6PCS4</accession>
<reference key="1">
    <citation type="submission" date="2003-10" db="EMBL/GenBank/DDBJ databases">
        <authorList>
            <consortium name="NIH - Zebrafish Gene Collection (ZGC) project"/>
        </authorList>
    </citation>
    <scope>NUCLEOTIDE SEQUENCE [LARGE SCALE MRNA]</scope>
    <source>
        <tissue>Kidney</tissue>
    </source>
</reference>
<sequence length="1337" mass="147666">MFRQGSNSGNKRMTSGARLSQPIIPLSLPTASSKTLEMGRSSKTNPLNAMGLDHNIATSGGDPEYIMQLVNDVRKFSDVLLSLKEAFHSKESQECSQHVVNERLGELVHVLKAVIGKHQALNSSEILGAAGTVIAKVKGVNFKEVNNENKSTIFGEIHTSIDTLAFTFGNVVSDFLMGDVDGGSRLGYPQARRSRSFENLSEDSRGCSQNDLADHSLSPELSTVEQVDLLLLKNDSGVESALLYAKAWSKYTKDVLAWVEKRLSLDMECAKSFAKMAESAKAVASQQDFMPFRDIYVSAFKNEIEYNHVLLQTAAALQTNKFTQPLLARKNDLDKQRKEIKEQWQRELKKMNESESALKKARLLKMQKREEYEKARSSTSRTEEEQPAAGGRTLEKKRRVEEEALQKAEEAQEQYKACVADLEAKKVSLSNAKSEILAQIRKLVFQCDLTLKAVTVNWFQMQQAQTMPLSVNYQALSEQAKKYEPGQRYSEFVRSLPKERVWLESLSQDITASSKTGMSLHKRSQNSTRSSHGNLSQGSATSMDNHSADEVEGNMQPCKAKIAERRSNSSIDMQVPRTQGSQRAWSSGSAGGGGMCSDSESAGGSSESRSMDSPTASPGDFKRRLPRTPSTGTMSSADDLDEREPPSPSDTGLSEMVMETASSPGPFRNAQMSKAAHTHKLRKLRAPSKCRECDSLVVFHGAECEECSLACHKKCLETLAIQCGHKKLQGRLHLFGIDFAQVVKNSPDGIPFIIKKCTSEIESRALTIKGIYRVNGAKSRVEKLCQAFENGKDLVELSDLHPHDISNVLKLYLRQLPEPLILYRYYNDVIGLAKETQNMDKTDSAKEKSAGEQLGLSTELKRVLFKVRDLLRQLPAPHYKTLQFLITHLHRVSEQAEENKMTASNLGIIFGPTLIKPRHLEAEVSLSSLVDYPHQARMVELLIKHHQMIFDVPLSPMSPTSPTVSQASFGSSIQDKESKLSRHSRSLMDIKESAKLYKRHSSVIIPAQLMEEGKEMKTGDHRVQTSGEGSDVNGVGLTSVDSTSVFNRPGASSRMVQLRPQRAKPVSRPISMPIDRLLNERNSRNTVEHDHSPAAIEETTEPEKPTTPRHTNFYRNPFIDTQTLRRTWDRQYRHYDVTPRTAMIVANLPPSGVQKQPEISMASQSSTSRKDGTSQSGVAPISFRAARTLKPSSPGTFYRPPSGGQLKPSDLLAKSVSRAPTTTTGAIYTTAITVLTTASTSSVMTISTAVTTPPTTPTTSVTVALTSKPTFTTVSRSVSGGAGEGLSESDLLSPVTLSPPQSPGSSTEELSPTDAKPLYQRRSRRMQELEHREAHFV</sequence>
<dbReference type="EMBL" id="BC059184">
    <property type="protein sequence ID" value="AAH59184.1"/>
    <property type="molecule type" value="mRNA"/>
</dbReference>
<dbReference type="RefSeq" id="NP_956405.1">
    <property type="nucleotide sequence ID" value="NM_200111.1"/>
</dbReference>
<dbReference type="SMR" id="Q6PCS4"/>
<dbReference type="FunCoup" id="Q6PCS4">
    <property type="interactions" value="406"/>
</dbReference>
<dbReference type="STRING" id="7955.ENSDARP00000115452"/>
<dbReference type="PaxDb" id="7955-ENSDARP00000115452"/>
<dbReference type="GeneID" id="378998"/>
<dbReference type="KEGG" id="dre:378998"/>
<dbReference type="AGR" id="ZFIN:ZDB-GENE-031010-44"/>
<dbReference type="CTD" id="378998"/>
<dbReference type="ZFIN" id="ZDB-GENE-031010-44">
    <property type="gene designation" value="arhgap29b"/>
</dbReference>
<dbReference type="eggNOG" id="KOG1453">
    <property type="taxonomic scope" value="Eukaryota"/>
</dbReference>
<dbReference type="InParanoid" id="Q6PCS4"/>
<dbReference type="OrthoDB" id="79452at2759"/>
<dbReference type="PhylomeDB" id="Q6PCS4"/>
<dbReference type="Reactome" id="R-DRE-8980692">
    <property type="pathway name" value="RHOA GTPase cycle"/>
</dbReference>
<dbReference type="Reactome" id="R-DRE-9013148">
    <property type="pathway name" value="CDC42 GTPase cycle"/>
</dbReference>
<dbReference type="Reactome" id="R-DRE-9013149">
    <property type="pathway name" value="RAC1 GTPase cycle"/>
</dbReference>
<dbReference type="PRO" id="PR:Q6PCS4"/>
<dbReference type="Proteomes" id="UP000000437">
    <property type="component" value="Chromosome 2"/>
</dbReference>
<dbReference type="GO" id="GO:0005737">
    <property type="term" value="C:cytoplasm"/>
    <property type="evidence" value="ECO:0000318"/>
    <property type="project" value="GO_Central"/>
</dbReference>
<dbReference type="GO" id="GO:0005096">
    <property type="term" value="F:GTPase activator activity"/>
    <property type="evidence" value="ECO:0000318"/>
    <property type="project" value="GO_Central"/>
</dbReference>
<dbReference type="GO" id="GO:0008270">
    <property type="term" value="F:zinc ion binding"/>
    <property type="evidence" value="ECO:0007669"/>
    <property type="project" value="UniProtKB-KW"/>
</dbReference>
<dbReference type="GO" id="GO:0051058">
    <property type="term" value="P:negative regulation of small GTPase mediated signal transduction"/>
    <property type="evidence" value="ECO:0000318"/>
    <property type="project" value="GO_Central"/>
</dbReference>
<dbReference type="GO" id="GO:0007165">
    <property type="term" value="P:signal transduction"/>
    <property type="evidence" value="ECO:0007669"/>
    <property type="project" value="InterPro"/>
</dbReference>
<dbReference type="CDD" id="cd20816">
    <property type="entry name" value="C1_GMIP-like"/>
    <property type="match status" value="1"/>
</dbReference>
<dbReference type="CDD" id="cd04409">
    <property type="entry name" value="RhoGAP_PARG1"/>
    <property type="match status" value="1"/>
</dbReference>
<dbReference type="FunFam" id="1.10.555.10:FF:000016">
    <property type="entry name" value="Rho GTPase activating protein 29"/>
    <property type="match status" value="1"/>
</dbReference>
<dbReference type="Gene3D" id="1.20.1270.60">
    <property type="entry name" value="Arfaptin homology (AH) domain/BAR domain"/>
    <property type="match status" value="1"/>
</dbReference>
<dbReference type="Gene3D" id="1.10.555.10">
    <property type="entry name" value="Rho GTPase activation protein"/>
    <property type="match status" value="1"/>
</dbReference>
<dbReference type="InterPro" id="IPR027267">
    <property type="entry name" value="AH/BAR_dom_sf"/>
</dbReference>
<dbReference type="InterPro" id="IPR046349">
    <property type="entry name" value="C1-like_sf"/>
</dbReference>
<dbReference type="InterPro" id="IPR031160">
    <property type="entry name" value="F_BAR"/>
</dbReference>
<dbReference type="InterPro" id="IPR054713">
    <property type="entry name" value="GMIP/FCHO2-like_FCH"/>
</dbReference>
<dbReference type="InterPro" id="IPR002219">
    <property type="entry name" value="PE/DAG-bd"/>
</dbReference>
<dbReference type="InterPro" id="IPR057028">
    <property type="entry name" value="RHG29_45_N"/>
</dbReference>
<dbReference type="InterPro" id="IPR008936">
    <property type="entry name" value="Rho_GTPase_activation_prot"/>
</dbReference>
<dbReference type="InterPro" id="IPR051025">
    <property type="entry name" value="RhoGAP"/>
</dbReference>
<dbReference type="InterPro" id="IPR000198">
    <property type="entry name" value="RhoGAP_dom"/>
</dbReference>
<dbReference type="PANTHER" id="PTHR15228:SF7">
    <property type="entry name" value="RHO GTPASE-ACTIVATING PROTEIN 29"/>
    <property type="match status" value="1"/>
</dbReference>
<dbReference type="PANTHER" id="PTHR15228">
    <property type="entry name" value="SPERMATHECAL PHYSIOLOGY VARIANT"/>
    <property type="match status" value="1"/>
</dbReference>
<dbReference type="Pfam" id="PF00130">
    <property type="entry name" value="C1_1"/>
    <property type="match status" value="1"/>
</dbReference>
<dbReference type="Pfam" id="PF22699">
    <property type="entry name" value="GMIP-like_FCH"/>
    <property type="match status" value="1"/>
</dbReference>
<dbReference type="Pfam" id="PF24235">
    <property type="entry name" value="RHG29_45_N"/>
    <property type="match status" value="1"/>
</dbReference>
<dbReference type="Pfam" id="PF00620">
    <property type="entry name" value="RhoGAP"/>
    <property type="match status" value="1"/>
</dbReference>
<dbReference type="SMART" id="SM00109">
    <property type="entry name" value="C1"/>
    <property type="match status" value="1"/>
</dbReference>
<dbReference type="SMART" id="SM00324">
    <property type="entry name" value="RhoGAP"/>
    <property type="match status" value="1"/>
</dbReference>
<dbReference type="SUPFAM" id="SSF103657">
    <property type="entry name" value="BAR/IMD domain-like"/>
    <property type="match status" value="1"/>
</dbReference>
<dbReference type="SUPFAM" id="SSF57889">
    <property type="entry name" value="Cysteine-rich domain"/>
    <property type="match status" value="1"/>
</dbReference>
<dbReference type="SUPFAM" id="SSF48350">
    <property type="entry name" value="GTPase activation domain, GAP"/>
    <property type="match status" value="1"/>
</dbReference>
<dbReference type="PROSITE" id="PS51741">
    <property type="entry name" value="F_BAR"/>
    <property type="match status" value="1"/>
</dbReference>
<dbReference type="PROSITE" id="PS50238">
    <property type="entry name" value="RHOGAP"/>
    <property type="match status" value="1"/>
</dbReference>
<dbReference type="PROSITE" id="PS00479">
    <property type="entry name" value="ZF_DAG_PE_1"/>
    <property type="match status" value="1"/>
</dbReference>
<dbReference type="PROSITE" id="PS50081">
    <property type="entry name" value="ZF_DAG_PE_2"/>
    <property type="match status" value="1"/>
</dbReference>
<keyword id="KW-0175">Coiled coil</keyword>
<keyword id="KW-0343">GTPase activation</keyword>
<keyword id="KW-0479">Metal-binding</keyword>
<keyword id="KW-1185">Reference proteome</keyword>
<keyword id="KW-0862">Zinc</keyword>
<keyword id="KW-0863">Zinc-finger</keyword>
<proteinExistence type="evidence at transcript level"/>
<feature type="chain" id="PRO_0000317585" description="Rho GTPase-activating protein 29">
    <location>
        <begin position="1"/>
        <end position="1337"/>
    </location>
</feature>
<feature type="domain" description="F-BAR" evidence="5">
    <location>
        <begin position="225"/>
        <end position="488"/>
    </location>
</feature>
<feature type="domain" description="Rho-GAP" evidence="3">
    <location>
        <begin position="737"/>
        <end position="950"/>
    </location>
</feature>
<feature type="zinc finger region" description="Phorbol-ester/DAG-type" evidence="4">
    <location>
        <begin position="676"/>
        <end position="723"/>
    </location>
</feature>
<feature type="region of interest" description="Disordered" evidence="6">
    <location>
        <begin position="1"/>
        <end position="20"/>
    </location>
</feature>
<feature type="region of interest" description="Disordered" evidence="6">
    <location>
        <begin position="369"/>
        <end position="397"/>
    </location>
</feature>
<feature type="region of interest" description="Disordered" evidence="6">
    <location>
        <begin position="513"/>
        <end position="551"/>
    </location>
</feature>
<feature type="region of interest" description="Disordered" evidence="6">
    <location>
        <begin position="564"/>
        <end position="654"/>
    </location>
</feature>
<feature type="region of interest" description="Disordered" evidence="6">
    <location>
        <begin position="960"/>
        <end position="983"/>
    </location>
</feature>
<feature type="region of interest" description="Disordered" evidence="6">
    <location>
        <begin position="1016"/>
        <end position="1066"/>
    </location>
</feature>
<feature type="region of interest" description="Disordered" evidence="6">
    <location>
        <begin position="1083"/>
        <end position="1114"/>
    </location>
</feature>
<feature type="region of interest" description="Disordered" evidence="6">
    <location>
        <begin position="1149"/>
        <end position="1210"/>
    </location>
</feature>
<feature type="region of interest" description="Disordered" evidence="6">
    <location>
        <begin position="1273"/>
        <end position="1337"/>
    </location>
</feature>
<feature type="coiled-coil region" evidence="2">
    <location>
        <begin position="326"/>
        <end position="443"/>
    </location>
</feature>
<feature type="compositionally biased region" description="Polar residues" evidence="6">
    <location>
        <begin position="1"/>
        <end position="13"/>
    </location>
</feature>
<feature type="compositionally biased region" description="Basic and acidic residues" evidence="6">
    <location>
        <begin position="369"/>
        <end position="384"/>
    </location>
</feature>
<feature type="compositionally biased region" description="Polar residues" evidence="6">
    <location>
        <begin position="525"/>
        <end position="545"/>
    </location>
</feature>
<feature type="compositionally biased region" description="Polar residues" evidence="6">
    <location>
        <begin position="568"/>
        <end position="579"/>
    </location>
</feature>
<feature type="compositionally biased region" description="Low complexity" evidence="6">
    <location>
        <begin position="596"/>
        <end position="613"/>
    </location>
</feature>
<feature type="compositionally biased region" description="Polar residues" evidence="6">
    <location>
        <begin position="960"/>
        <end position="973"/>
    </location>
</feature>
<feature type="compositionally biased region" description="Basic and acidic residues" evidence="6">
    <location>
        <begin position="974"/>
        <end position="983"/>
    </location>
</feature>
<feature type="compositionally biased region" description="Basic and acidic residues" evidence="6">
    <location>
        <begin position="1083"/>
        <end position="1092"/>
    </location>
</feature>
<feature type="compositionally biased region" description="Polar residues" evidence="6">
    <location>
        <begin position="1161"/>
        <end position="1177"/>
    </location>
</feature>
<feature type="compositionally biased region" description="Polar residues" evidence="6">
    <location>
        <begin position="1295"/>
        <end position="1310"/>
    </location>
</feature>
<feature type="compositionally biased region" description="Basic and acidic residues" evidence="6">
    <location>
        <begin position="1325"/>
        <end position="1337"/>
    </location>
</feature>
<feature type="site" description="Arginine finger; crucial for GTP hydrolysis by stabilizing the transition state" evidence="3">
    <location>
        <position position="773"/>
    </location>
</feature>
<protein>
    <recommendedName>
        <fullName>Rho GTPase-activating protein 29</fullName>
    </recommendedName>
    <alternativeName>
        <fullName>Rho-type GTPase-activating protein 29</fullName>
    </alternativeName>
</protein>
<comment type="function">
    <text evidence="1">GTPase activator for the Rho-type GTPases by converting them to an inactive GDP-bound state. Has strong activity toward RHOA, and weaker activity toward RAC1 and CDC42 (By similarity).</text>
</comment>